<keyword id="KW-0007">Acetylation</keyword>
<keyword id="KW-1003">Cell membrane</keyword>
<keyword id="KW-0963">Cytoplasm</keyword>
<keyword id="KW-0903">Direct protein sequencing</keyword>
<keyword id="KW-0256">Endoplasmic reticulum</keyword>
<keyword id="KW-0276">Fatty acid metabolism</keyword>
<keyword id="KW-0378">Hydrolase</keyword>
<keyword id="KW-0443">Lipid metabolism</keyword>
<keyword id="KW-0472">Membrane</keyword>
<keyword id="KW-0539">Nucleus</keyword>
<keyword id="KW-1185">Reference proteome</keyword>
<organism>
    <name type="scientific">Rattus norvegicus</name>
    <name type="common">Rat</name>
    <dbReference type="NCBI Taxonomy" id="10116"/>
    <lineage>
        <taxon>Eukaryota</taxon>
        <taxon>Metazoa</taxon>
        <taxon>Chordata</taxon>
        <taxon>Craniata</taxon>
        <taxon>Vertebrata</taxon>
        <taxon>Euteleostomi</taxon>
        <taxon>Mammalia</taxon>
        <taxon>Eutheria</taxon>
        <taxon>Euarchontoglires</taxon>
        <taxon>Glires</taxon>
        <taxon>Rodentia</taxon>
        <taxon>Myomorpha</taxon>
        <taxon>Muroidea</taxon>
        <taxon>Muridae</taxon>
        <taxon>Murinae</taxon>
        <taxon>Rattus</taxon>
    </lineage>
</organism>
<proteinExistence type="evidence at protein level"/>
<evidence type="ECO:0000250" key="1">
    <source>
        <dbReference type="UniProtKB" id="O75608"/>
    </source>
</evidence>
<evidence type="ECO:0000250" key="2">
    <source>
        <dbReference type="UniProtKB" id="P97823"/>
    </source>
</evidence>
<evidence type="ECO:0000269" key="3">
    <source>
    </source>
</evidence>
<evidence type="ECO:0000269" key="4">
    <source>
    </source>
</evidence>
<evidence type="ECO:0000269" key="5">
    <source>
    </source>
</evidence>
<evidence type="ECO:0000305" key="6"/>
<comment type="function">
    <text evidence="1 3 4 5">Acts as an acyl-protein thioesterase (PubMed:9624183). Hydrolyzes fatty acids from S-acylated cysteine residues in proteins such as trimeric G alpha proteins or HRAS (PubMed:9624183). Acts as a palmitoyl thioesterase that catalyzes depalmitoylation of proteins, such as ADRB2, KCNMA1 and SQSTM1 (By similarity). Acts as a negative regulator of autophagy by mediating palmitoylation of SQSTM1, decreasing affinity between SQSTM1 and ATG8 proteins and recruitment of ubiquitinated cargo proteins to autophagosomes (By similarity). Acts as a lysophospholipase and hydrolyzes lysophosphatidylcholine (lyso-PC) (By similarity). Also hydrolyzes lysophosphatidylethanolamine (lyso-PE), lysophosphatidylinositol (lyso-PI) and lysophosphatidylserine (lyso-PS) (PubMed:8631810, PubMed:9644627). Has much higher thioesterase activity than lysophospholipase activity (By similarity). Contributes to the production of lysophosphatidic acid (LPA) during blood coagulation by recognizing and cleaving plasma phospholipids to generate lysophospholipids which in turn act as substrates for ENPP2 to produce LPA (By similarity).</text>
</comment>
<comment type="catalytic activity">
    <reaction evidence="1">
        <text>S-hexadecanoyl-L-cysteinyl-[protein] + H2O = L-cysteinyl-[protein] + hexadecanoate + H(+)</text>
        <dbReference type="Rhea" id="RHEA:19233"/>
        <dbReference type="Rhea" id="RHEA-COMP:10131"/>
        <dbReference type="Rhea" id="RHEA-COMP:11032"/>
        <dbReference type="ChEBI" id="CHEBI:7896"/>
        <dbReference type="ChEBI" id="CHEBI:15377"/>
        <dbReference type="ChEBI" id="CHEBI:15378"/>
        <dbReference type="ChEBI" id="CHEBI:29950"/>
        <dbReference type="ChEBI" id="CHEBI:74151"/>
        <dbReference type="EC" id="3.1.2.22"/>
    </reaction>
</comment>
<comment type="catalytic activity">
    <reaction evidence="1">
        <text>1-hexadecanoyl-sn-glycero-3-phosphocholine + H2O = sn-glycerol 3-phosphocholine + hexadecanoate + H(+)</text>
        <dbReference type="Rhea" id="RHEA:40435"/>
        <dbReference type="ChEBI" id="CHEBI:7896"/>
        <dbReference type="ChEBI" id="CHEBI:15377"/>
        <dbReference type="ChEBI" id="CHEBI:15378"/>
        <dbReference type="ChEBI" id="CHEBI:16870"/>
        <dbReference type="ChEBI" id="CHEBI:72998"/>
    </reaction>
    <physiologicalReaction direction="left-to-right" evidence="1">
        <dbReference type="Rhea" id="RHEA:40436"/>
    </physiologicalReaction>
</comment>
<comment type="catalytic activity">
    <reaction evidence="1">
        <text>a 1-(9Z-octadecenoyl)-2-acyl-sn-glycero-3-phosphocholine + H2O = a 2-acyl-sn-glycero-3-phosphocholine + (9Z)-octadecenoate + H(+)</text>
        <dbReference type="Rhea" id="RHEA:41720"/>
        <dbReference type="ChEBI" id="CHEBI:15377"/>
        <dbReference type="ChEBI" id="CHEBI:15378"/>
        <dbReference type="ChEBI" id="CHEBI:30823"/>
        <dbReference type="ChEBI" id="CHEBI:57875"/>
        <dbReference type="ChEBI" id="CHEBI:78421"/>
    </reaction>
    <physiologicalReaction direction="left-to-right" evidence="1">
        <dbReference type="Rhea" id="RHEA:41721"/>
    </physiologicalReaction>
</comment>
<comment type="subunit">
    <text evidence="1">Homodimer.</text>
</comment>
<comment type="subcellular location">
    <subcellularLocation>
        <location evidence="4">Cytoplasm</location>
    </subcellularLocation>
    <subcellularLocation>
        <location evidence="1">Cell membrane</location>
    </subcellularLocation>
    <subcellularLocation>
        <location evidence="1">Nucleus membrane</location>
    </subcellularLocation>
    <subcellularLocation>
        <location evidence="1">Endoplasmic reticulum</location>
    </subcellularLocation>
    <text evidence="1">Shows predominantly a cytoplasmic localization with a weak expression in the cell membrane, nuclear membrane and endoplasmic reticulum.</text>
</comment>
<comment type="tissue specificity">
    <text evidence="3 5">Ubiquitous. Detected at low levels in all tissues tested.</text>
</comment>
<comment type="similarity">
    <text evidence="6">Belongs to the AB hydrolase superfamily. AB hydrolase 2 family.</text>
</comment>
<dbReference type="EC" id="3.1.2.-"/>
<dbReference type="EC" id="3.1.2.22" evidence="1"/>
<dbReference type="EMBL" id="D63885">
    <property type="protein sequence ID" value="BAA09935.1"/>
    <property type="molecule type" value="mRNA"/>
</dbReference>
<dbReference type="EMBL" id="U97146">
    <property type="protein sequence ID" value="AAC63430.1"/>
    <property type="molecule type" value="mRNA"/>
</dbReference>
<dbReference type="EMBL" id="BC085750">
    <property type="protein sequence ID" value="AAH85750.1"/>
    <property type="molecule type" value="mRNA"/>
</dbReference>
<dbReference type="RefSeq" id="NP_037138.1">
    <property type="nucleotide sequence ID" value="NM_013006.3"/>
</dbReference>
<dbReference type="SMR" id="P70470"/>
<dbReference type="BioGRID" id="247546">
    <property type="interactions" value="1"/>
</dbReference>
<dbReference type="FunCoup" id="P70470">
    <property type="interactions" value="3210"/>
</dbReference>
<dbReference type="IntAct" id="P70470">
    <property type="interactions" value="1"/>
</dbReference>
<dbReference type="STRING" id="10116.ENSRNOP00000011312"/>
<dbReference type="BindingDB" id="P70470"/>
<dbReference type="ChEMBL" id="CHEMBL2280"/>
<dbReference type="ESTHER" id="ratno-lypla1a">
    <property type="family name" value="LYsophospholipase_carboxylesterase"/>
</dbReference>
<dbReference type="iPTMnet" id="P70470"/>
<dbReference type="PhosphoSitePlus" id="P70470"/>
<dbReference type="SwissPalm" id="P70470"/>
<dbReference type="jPOST" id="P70470"/>
<dbReference type="PaxDb" id="10116-ENSRNOP00000011312"/>
<dbReference type="Ensembl" id="ENSRNOT00000117962.1">
    <property type="protein sequence ID" value="ENSRNOP00000083839.1"/>
    <property type="gene ID" value="ENSRNOG00000008320.4"/>
</dbReference>
<dbReference type="GeneID" id="25514"/>
<dbReference type="KEGG" id="rno:25514"/>
<dbReference type="UCSC" id="RGD:3025">
    <property type="organism name" value="rat"/>
</dbReference>
<dbReference type="AGR" id="RGD:3025"/>
<dbReference type="CTD" id="10434"/>
<dbReference type="RGD" id="3025">
    <property type="gene designation" value="Lypla1"/>
</dbReference>
<dbReference type="eggNOG" id="KOG2112">
    <property type="taxonomic scope" value="Eukaryota"/>
</dbReference>
<dbReference type="GeneTree" id="ENSGT00940000154185"/>
<dbReference type="HOGENOM" id="CLU_049413_3_5_1"/>
<dbReference type="InParanoid" id="P70470"/>
<dbReference type="PhylomeDB" id="P70470"/>
<dbReference type="TreeFam" id="TF314619"/>
<dbReference type="Reactome" id="R-RNO-203615">
    <property type="pathway name" value="eNOS activation"/>
</dbReference>
<dbReference type="Reactome" id="R-RNO-9648002">
    <property type="pathway name" value="RAS processing"/>
</dbReference>
<dbReference type="PRO" id="PR:P70470"/>
<dbReference type="Proteomes" id="UP000002494">
    <property type="component" value="Chromosome 5"/>
</dbReference>
<dbReference type="Bgee" id="ENSRNOG00000008320">
    <property type="expression patterns" value="Expressed in adult mammalian kidney and 19 other cell types or tissues"/>
</dbReference>
<dbReference type="GO" id="GO:0005737">
    <property type="term" value="C:cytoplasm"/>
    <property type="evidence" value="ECO:0000250"/>
    <property type="project" value="UniProtKB"/>
</dbReference>
<dbReference type="GO" id="GO:0005829">
    <property type="term" value="C:cytosol"/>
    <property type="evidence" value="ECO:0000266"/>
    <property type="project" value="RGD"/>
</dbReference>
<dbReference type="GO" id="GO:0005783">
    <property type="term" value="C:endoplasmic reticulum"/>
    <property type="evidence" value="ECO:0000250"/>
    <property type="project" value="UniProtKB"/>
</dbReference>
<dbReference type="GO" id="GO:0005739">
    <property type="term" value="C:mitochondrion"/>
    <property type="evidence" value="ECO:0000266"/>
    <property type="project" value="RGD"/>
</dbReference>
<dbReference type="GO" id="GO:0031965">
    <property type="term" value="C:nuclear membrane"/>
    <property type="evidence" value="ECO:0000250"/>
    <property type="project" value="UniProtKB"/>
</dbReference>
<dbReference type="GO" id="GO:0005886">
    <property type="term" value="C:plasma membrane"/>
    <property type="evidence" value="ECO:0000250"/>
    <property type="project" value="UniProtKB"/>
</dbReference>
<dbReference type="GO" id="GO:0052689">
    <property type="term" value="F:carboxylic ester hydrolase activity"/>
    <property type="evidence" value="ECO:0000318"/>
    <property type="project" value="GO_Central"/>
</dbReference>
<dbReference type="GO" id="GO:0016298">
    <property type="term" value="F:lipase activity"/>
    <property type="evidence" value="ECO:0000266"/>
    <property type="project" value="RGD"/>
</dbReference>
<dbReference type="GO" id="GO:0004622">
    <property type="term" value="F:lysophospholipase activity"/>
    <property type="evidence" value="ECO:0000314"/>
    <property type="project" value="RGD"/>
</dbReference>
<dbReference type="GO" id="GO:0008474">
    <property type="term" value="F:palmitoyl-(protein) hydrolase activity"/>
    <property type="evidence" value="ECO:0000250"/>
    <property type="project" value="UniProtKB"/>
</dbReference>
<dbReference type="GO" id="GO:0004620">
    <property type="term" value="F:phospholipase activity"/>
    <property type="evidence" value="ECO:0000266"/>
    <property type="project" value="RGD"/>
</dbReference>
<dbReference type="GO" id="GO:0006631">
    <property type="term" value="P:fatty acid metabolic process"/>
    <property type="evidence" value="ECO:0007669"/>
    <property type="project" value="UniProtKB-KW"/>
</dbReference>
<dbReference type="GO" id="GO:0015908">
    <property type="term" value="P:fatty acid transport"/>
    <property type="evidence" value="ECO:0000266"/>
    <property type="project" value="RGD"/>
</dbReference>
<dbReference type="GO" id="GO:1905336">
    <property type="term" value="P:negative regulation of aggrephagy"/>
    <property type="evidence" value="ECO:0000266"/>
    <property type="project" value="RGD"/>
</dbReference>
<dbReference type="GO" id="GO:0042997">
    <property type="term" value="P:negative regulation of Golgi to plasma membrane protein transport"/>
    <property type="evidence" value="ECO:0000266"/>
    <property type="project" value="RGD"/>
</dbReference>
<dbReference type="GO" id="GO:0002084">
    <property type="term" value="P:protein depalmitoylation"/>
    <property type="evidence" value="ECO:0000250"/>
    <property type="project" value="UniProtKB"/>
</dbReference>
<dbReference type="FunFam" id="3.40.50.1820:FF:000010">
    <property type="entry name" value="Acyl-protein thioesterase 2"/>
    <property type="match status" value="1"/>
</dbReference>
<dbReference type="Gene3D" id="3.40.50.1820">
    <property type="entry name" value="alpha/beta hydrolase"/>
    <property type="match status" value="1"/>
</dbReference>
<dbReference type="InterPro" id="IPR029058">
    <property type="entry name" value="AB_hydrolase_fold"/>
</dbReference>
<dbReference type="InterPro" id="IPR050565">
    <property type="entry name" value="LYPA1-2/EST-like"/>
</dbReference>
<dbReference type="InterPro" id="IPR003140">
    <property type="entry name" value="PLipase/COase/thioEstase"/>
</dbReference>
<dbReference type="PANTHER" id="PTHR10655:SF22">
    <property type="entry name" value="ACYL-PROTEIN THIOESTERASE 1"/>
    <property type="match status" value="1"/>
</dbReference>
<dbReference type="PANTHER" id="PTHR10655">
    <property type="entry name" value="LYSOPHOSPHOLIPASE-RELATED"/>
    <property type="match status" value="1"/>
</dbReference>
<dbReference type="Pfam" id="PF02230">
    <property type="entry name" value="Abhydrolase_2"/>
    <property type="match status" value="1"/>
</dbReference>
<dbReference type="SUPFAM" id="SSF53474">
    <property type="entry name" value="alpha/beta-Hydrolases"/>
    <property type="match status" value="1"/>
</dbReference>
<protein>
    <recommendedName>
        <fullName>Acyl-protein thioesterase 1</fullName>
        <shortName>APT-1</shortName>
        <ecNumber>3.1.2.-</ecNumber>
    </recommendedName>
    <alternativeName>
        <fullName>Lysophospholipase 1</fullName>
    </alternativeName>
    <alternativeName>
        <fullName>Lysophospholipase I</fullName>
        <shortName>LPL-I</shortName>
        <shortName>LysoPLA I</shortName>
    </alternativeName>
    <alternativeName>
        <fullName evidence="6">Palmitoyl-protein hydrolase</fullName>
        <ecNumber evidence="1">3.1.2.22</ecNumber>
    </alternativeName>
</protein>
<accession>P70470</accession>
<reference key="1">
    <citation type="journal article" date="1996" name="J. Biol. Chem.">
        <title>Purification, cDNA cloning, and regulation of lysophospholipase from rat liver.</title>
        <authorList>
            <person name="Sugimoto H."/>
            <person name="Hayashi H."/>
            <person name="Yamashita S."/>
        </authorList>
    </citation>
    <scope>NUCLEOTIDE SEQUENCE [MRNA]</scope>
    <scope>PROTEIN SEQUENCE OF 20-30 AND 192-196</scope>
    <scope>FUNCTION</scope>
    <scope>TISSUE SPECIFICITY</scope>
    <source>
        <strain>Wistar</strain>
        <tissue>Liver</tissue>
    </source>
</reference>
<reference key="2">
    <citation type="journal article" date="1998" name="J. Am. Soc. Nephrol.">
        <title>cDNA cloning and expression of a novel family of enzymes with calcium-independent phospholipase A2 and lysophospholipase activities.</title>
        <authorList>
            <person name="Portilla D."/>
            <person name="Crew M.D."/>
            <person name="Grant D."/>
            <person name="Serrero G."/>
            <person name="Bates L.M."/>
            <person name="Dai G."/>
            <person name="Sasner M."/>
            <person name="Cheng J."/>
            <person name="Buonanno A."/>
        </authorList>
    </citation>
    <scope>NUCLEOTIDE SEQUENCE [MRNA]</scope>
    <scope>FUNCTION</scope>
    <scope>TISSUE SPECIFICITY</scope>
    <source>
        <tissue>Hypothalamus</tissue>
    </source>
</reference>
<reference key="3">
    <citation type="journal article" date="2004" name="Genome Res.">
        <title>The status, quality, and expansion of the NIH full-length cDNA project: the Mammalian Gene Collection (MGC).</title>
        <authorList>
            <consortium name="The MGC Project Team"/>
        </authorList>
    </citation>
    <scope>NUCLEOTIDE SEQUENCE [LARGE SCALE MRNA]</scope>
    <source>
        <tissue>Heart</tissue>
    </source>
</reference>
<reference key="4">
    <citation type="journal article" date="1998" name="J. Biol. Chem.">
        <title>A cytoplasmic acyl-protein thioesterase that removes palmitate from G protein alpha subunits and p21(RAS).</title>
        <authorList>
            <person name="Duncan J.A."/>
            <person name="Gilman A.G."/>
        </authorList>
    </citation>
    <scope>PROTEIN SEQUENCE OF 98-112 AND 191-201</scope>
    <scope>FUNCTION</scope>
    <scope>SUBCELLULAR LOCATION</scope>
</reference>
<name>LYPA1_RAT</name>
<feature type="chain" id="PRO_0000102270" description="Acyl-protein thioesterase 1">
    <location>
        <begin position="1"/>
        <end position="230"/>
    </location>
</feature>
<feature type="active site" description="Charge relay system" evidence="1">
    <location>
        <position position="119"/>
    </location>
</feature>
<feature type="active site" description="Charge relay system" evidence="1">
    <location>
        <position position="174"/>
    </location>
</feature>
<feature type="active site" description="Charge relay system" evidence="1">
    <location>
        <position position="208"/>
    </location>
</feature>
<feature type="modified residue" description="N6-acetyllysine" evidence="2">
    <location>
        <position position="224"/>
    </location>
</feature>
<gene>
    <name type="primary">Lypla1</name>
    <name type="synonym">Apt1</name>
</gene>
<sequence length="230" mass="24709">MCGNNMSAPMPAVVPAARKATAAVIFLHGLGDTGHGWAEAFAGIKSSHIKYICPHAPVMPVTLNMSMMMPSWFDIIGLSPDSQEDESGIKQAAETVKALIDQEVKNGIPSNRIILGGFSQGGALSLYTALTTQQKLAGVTALSCWLPLRASFSQGPINSANRDISVLQCHGDCDPLVPLMFGSLTVERLKGLVNPANVTFKVYEGMMHSSCQQEMMDVKYFIDKLLPPID</sequence>